<feature type="chain" id="PRO_1000055421" description="Large ribosomal subunit protein uL13">
    <location>
        <begin position="1"/>
        <end position="143"/>
    </location>
</feature>
<protein>
    <recommendedName>
        <fullName evidence="1">Large ribosomal subunit protein uL13</fullName>
    </recommendedName>
    <alternativeName>
        <fullName evidence="2">50S ribosomal protein L13</fullName>
    </alternativeName>
</protein>
<evidence type="ECO:0000255" key="1">
    <source>
        <dbReference type="HAMAP-Rule" id="MF_01366"/>
    </source>
</evidence>
<evidence type="ECO:0000305" key="2"/>
<name>RL13_NEIMF</name>
<accession>A1KWD6</accession>
<organism>
    <name type="scientific">Neisseria meningitidis serogroup C / serotype 2a (strain ATCC 700532 / DSM 15464 / FAM18)</name>
    <dbReference type="NCBI Taxonomy" id="272831"/>
    <lineage>
        <taxon>Bacteria</taxon>
        <taxon>Pseudomonadati</taxon>
        <taxon>Pseudomonadota</taxon>
        <taxon>Betaproteobacteria</taxon>
        <taxon>Neisseriales</taxon>
        <taxon>Neisseriaceae</taxon>
        <taxon>Neisseria</taxon>
    </lineage>
</organism>
<dbReference type="EMBL" id="AM421808">
    <property type="protein sequence ID" value="CAM11193.1"/>
    <property type="molecule type" value="Genomic_DNA"/>
</dbReference>
<dbReference type="RefSeq" id="WP_002215010.1">
    <property type="nucleotide sequence ID" value="NC_008767.1"/>
</dbReference>
<dbReference type="SMR" id="A1KWD6"/>
<dbReference type="GeneID" id="93386984"/>
<dbReference type="KEGG" id="nmc:NMC2038"/>
<dbReference type="HOGENOM" id="CLU_082184_2_2_4"/>
<dbReference type="Proteomes" id="UP000002286">
    <property type="component" value="Chromosome"/>
</dbReference>
<dbReference type="GO" id="GO:0022625">
    <property type="term" value="C:cytosolic large ribosomal subunit"/>
    <property type="evidence" value="ECO:0007669"/>
    <property type="project" value="TreeGrafter"/>
</dbReference>
<dbReference type="GO" id="GO:0003729">
    <property type="term" value="F:mRNA binding"/>
    <property type="evidence" value="ECO:0007669"/>
    <property type="project" value="TreeGrafter"/>
</dbReference>
<dbReference type="GO" id="GO:0003735">
    <property type="term" value="F:structural constituent of ribosome"/>
    <property type="evidence" value="ECO:0007669"/>
    <property type="project" value="InterPro"/>
</dbReference>
<dbReference type="GO" id="GO:0017148">
    <property type="term" value="P:negative regulation of translation"/>
    <property type="evidence" value="ECO:0007669"/>
    <property type="project" value="TreeGrafter"/>
</dbReference>
<dbReference type="GO" id="GO:0006412">
    <property type="term" value="P:translation"/>
    <property type="evidence" value="ECO:0007669"/>
    <property type="project" value="UniProtKB-UniRule"/>
</dbReference>
<dbReference type="CDD" id="cd00392">
    <property type="entry name" value="Ribosomal_L13"/>
    <property type="match status" value="1"/>
</dbReference>
<dbReference type="FunFam" id="3.90.1180.10:FF:000001">
    <property type="entry name" value="50S ribosomal protein L13"/>
    <property type="match status" value="1"/>
</dbReference>
<dbReference type="Gene3D" id="3.90.1180.10">
    <property type="entry name" value="Ribosomal protein L13"/>
    <property type="match status" value="1"/>
</dbReference>
<dbReference type="HAMAP" id="MF_01366">
    <property type="entry name" value="Ribosomal_uL13"/>
    <property type="match status" value="1"/>
</dbReference>
<dbReference type="InterPro" id="IPR005822">
    <property type="entry name" value="Ribosomal_uL13"/>
</dbReference>
<dbReference type="InterPro" id="IPR005823">
    <property type="entry name" value="Ribosomal_uL13_bac-type"/>
</dbReference>
<dbReference type="InterPro" id="IPR036899">
    <property type="entry name" value="Ribosomal_uL13_sf"/>
</dbReference>
<dbReference type="NCBIfam" id="TIGR01066">
    <property type="entry name" value="rplM_bact"/>
    <property type="match status" value="1"/>
</dbReference>
<dbReference type="PANTHER" id="PTHR11545:SF2">
    <property type="entry name" value="LARGE RIBOSOMAL SUBUNIT PROTEIN UL13M"/>
    <property type="match status" value="1"/>
</dbReference>
<dbReference type="PANTHER" id="PTHR11545">
    <property type="entry name" value="RIBOSOMAL PROTEIN L13"/>
    <property type="match status" value="1"/>
</dbReference>
<dbReference type="Pfam" id="PF00572">
    <property type="entry name" value="Ribosomal_L13"/>
    <property type="match status" value="1"/>
</dbReference>
<dbReference type="PIRSF" id="PIRSF002181">
    <property type="entry name" value="Ribosomal_L13"/>
    <property type="match status" value="1"/>
</dbReference>
<dbReference type="SUPFAM" id="SSF52161">
    <property type="entry name" value="Ribosomal protein L13"/>
    <property type="match status" value="1"/>
</dbReference>
<keyword id="KW-0687">Ribonucleoprotein</keyword>
<keyword id="KW-0689">Ribosomal protein</keyword>
<reference key="1">
    <citation type="journal article" date="2007" name="PLoS Genet.">
        <title>Meningococcal genetic variation mechanisms viewed through comparative analysis of serogroup C strain FAM18.</title>
        <authorList>
            <person name="Bentley S.D."/>
            <person name="Vernikos G.S."/>
            <person name="Snyder L.A.S."/>
            <person name="Churcher C."/>
            <person name="Arrowsmith C."/>
            <person name="Chillingworth T."/>
            <person name="Cronin A."/>
            <person name="Davis P.H."/>
            <person name="Holroyd N.E."/>
            <person name="Jagels K."/>
            <person name="Maddison M."/>
            <person name="Moule S."/>
            <person name="Rabbinowitsch E."/>
            <person name="Sharp S."/>
            <person name="Unwin L."/>
            <person name="Whitehead S."/>
            <person name="Quail M.A."/>
            <person name="Achtman M."/>
            <person name="Barrell B.G."/>
            <person name="Saunders N.J."/>
            <person name="Parkhill J."/>
        </authorList>
    </citation>
    <scope>NUCLEOTIDE SEQUENCE [LARGE SCALE GENOMIC DNA]</scope>
    <source>
        <strain>ATCC 700532 / DSM 15464 / FAM18</strain>
    </source>
</reference>
<gene>
    <name evidence="1" type="primary">rplM</name>
    <name type="ordered locus">NMC2038</name>
</gene>
<sequence length="143" mass="16222">MKTFSAKPHEVKREWFVIDAQDKVLGRVAAEVASRLRGKHKPEYTPHVDTGDYIIVINADKLRVTGAKFEDKKYFRHSGFPGGIYERTFREMQEQFPGRALEQAVKGMLPKGPLGYAMIKKLKVYAGAEHAHAAQQPKVLELK</sequence>
<proteinExistence type="inferred from homology"/>
<comment type="function">
    <text evidence="1">This protein is one of the early assembly proteins of the 50S ribosomal subunit, although it is not seen to bind rRNA by itself. It is important during the early stages of 50S assembly.</text>
</comment>
<comment type="subunit">
    <text evidence="1">Part of the 50S ribosomal subunit.</text>
</comment>
<comment type="similarity">
    <text evidence="1">Belongs to the universal ribosomal protein uL13 family.</text>
</comment>